<organism>
    <name type="scientific">Citrobacter koseri (strain ATCC BAA-895 / CDC 4225-83 / SGSC4696)</name>
    <dbReference type="NCBI Taxonomy" id="290338"/>
    <lineage>
        <taxon>Bacteria</taxon>
        <taxon>Pseudomonadati</taxon>
        <taxon>Pseudomonadota</taxon>
        <taxon>Gammaproteobacteria</taxon>
        <taxon>Enterobacterales</taxon>
        <taxon>Enterobacteriaceae</taxon>
        <taxon>Citrobacter</taxon>
    </lineage>
</organism>
<reference key="1">
    <citation type="submission" date="2007-08" db="EMBL/GenBank/DDBJ databases">
        <authorList>
            <consortium name="The Citrobacter koseri Genome Sequencing Project"/>
            <person name="McClelland M."/>
            <person name="Sanderson E.K."/>
            <person name="Porwollik S."/>
            <person name="Spieth J."/>
            <person name="Clifton W.S."/>
            <person name="Latreille P."/>
            <person name="Courtney L."/>
            <person name="Wang C."/>
            <person name="Pepin K."/>
            <person name="Bhonagiri V."/>
            <person name="Nash W."/>
            <person name="Johnson M."/>
            <person name="Thiruvilangam P."/>
            <person name="Wilson R."/>
        </authorList>
    </citation>
    <scope>NUCLEOTIDE SEQUENCE [LARGE SCALE GENOMIC DNA]</scope>
    <source>
        <strain>ATCC BAA-895 / CDC 4225-83 / SGSC4696</strain>
    </source>
</reference>
<gene>
    <name type="ordered locus">CKO_02153</name>
</gene>
<feature type="chain" id="PRO_1000065837" description="UPF0434 protein CKO_02153">
    <location>
        <begin position="1"/>
        <end position="60"/>
    </location>
</feature>
<dbReference type="EMBL" id="CP000822">
    <property type="protein sequence ID" value="ABV13277.1"/>
    <property type="molecule type" value="Genomic_DNA"/>
</dbReference>
<dbReference type="SMR" id="A8AIG4"/>
<dbReference type="STRING" id="290338.CKO_02153"/>
<dbReference type="GeneID" id="45136092"/>
<dbReference type="KEGG" id="cko:CKO_02153"/>
<dbReference type="HOGENOM" id="CLU_155659_3_1_6"/>
<dbReference type="OrthoDB" id="9812205at2"/>
<dbReference type="Proteomes" id="UP000008148">
    <property type="component" value="Chromosome"/>
</dbReference>
<dbReference type="GO" id="GO:0005829">
    <property type="term" value="C:cytosol"/>
    <property type="evidence" value="ECO:0007669"/>
    <property type="project" value="TreeGrafter"/>
</dbReference>
<dbReference type="FunFam" id="2.20.25.10:FF:000002">
    <property type="entry name" value="UPF0434 protein YcaR"/>
    <property type="match status" value="1"/>
</dbReference>
<dbReference type="Gene3D" id="2.20.25.10">
    <property type="match status" value="1"/>
</dbReference>
<dbReference type="HAMAP" id="MF_01187">
    <property type="entry name" value="UPF0434"/>
    <property type="match status" value="1"/>
</dbReference>
<dbReference type="InterPro" id="IPR005651">
    <property type="entry name" value="Trm112-like"/>
</dbReference>
<dbReference type="NCBIfam" id="NF008806">
    <property type="entry name" value="PRK11827.1"/>
    <property type="match status" value="1"/>
</dbReference>
<dbReference type="PANTHER" id="PTHR33505:SF4">
    <property type="entry name" value="PROTEIN PREY, MITOCHONDRIAL"/>
    <property type="match status" value="1"/>
</dbReference>
<dbReference type="PANTHER" id="PTHR33505">
    <property type="entry name" value="ZGC:162634"/>
    <property type="match status" value="1"/>
</dbReference>
<dbReference type="Pfam" id="PF03966">
    <property type="entry name" value="Trm112p"/>
    <property type="match status" value="1"/>
</dbReference>
<dbReference type="SUPFAM" id="SSF158997">
    <property type="entry name" value="Trm112p-like"/>
    <property type="match status" value="1"/>
</dbReference>
<protein>
    <recommendedName>
        <fullName evidence="1">UPF0434 protein CKO_02153</fullName>
    </recommendedName>
</protein>
<keyword id="KW-1185">Reference proteome</keyword>
<sequence length="60" mass="6843">MDHRLLEIIACPVCNGKLWYNQEKQELICKLDNLAFPLRDGIPVLLETEARSITADESKS</sequence>
<name>Y2153_CITK8</name>
<accession>A8AIG4</accession>
<proteinExistence type="inferred from homology"/>
<evidence type="ECO:0000255" key="1">
    <source>
        <dbReference type="HAMAP-Rule" id="MF_01187"/>
    </source>
</evidence>
<comment type="similarity">
    <text evidence="1">Belongs to the UPF0434 family.</text>
</comment>